<accession>A6WNM7</accession>
<name>IHFB_SHEB8</name>
<comment type="function">
    <text evidence="1">This protein is one of the two subunits of integration host factor, a specific DNA-binding protein that functions in genetic recombination as well as in transcriptional and translational control.</text>
</comment>
<comment type="subunit">
    <text evidence="1">Heterodimer of an alpha and a beta chain.</text>
</comment>
<comment type="similarity">
    <text evidence="1">Belongs to the bacterial histone-like protein family.</text>
</comment>
<keyword id="KW-0233">DNA recombination</keyword>
<keyword id="KW-0238">DNA-binding</keyword>
<keyword id="KW-0804">Transcription</keyword>
<keyword id="KW-0805">Transcription regulation</keyword>
<keyword id="KW-0810">Translation regulation</keyword>
<sequence>MTKSELIEKLATRQSQLSAKEVEGAIKEMLEQMATTLESGDRIEIRGFGSFSLHYRAPRTGRNPKTGSSVDLEGKYVPHFKPGKELRERVDAVNV</sequence>
<feature type="chain" id="PRO_1000060655" description="Integration host factor subunit beta">
    <location>
        <begin position="1"/>
        <end position="95"/>
    </location>
</feature>
<feature type="region of interest" description="Disordered" evidence="2">
    <location>
        <begin position="56"/>
        <end position="76"/>
    </location>
</feature>
<organism>
    <name type="scientific">Shewanella baltica (strain OS185)</name>
    <dbReference type="NCBI Taxonomy" id="402882"/>
    <lineage>
        <taxon>Bacteria</taxon>
        <taxon>Pseudomonadati</taxon>
        <taxon>Pseudomonadota</taxon>
        <taxon>Gammaproteobacteria</taxon>
        <taxon>Alteromonadales</taxon>
        <taxon>Shewanellaceae</taxon>
        <taxon>Shewanella</taxon>
    </lineage>
</organism>
<evidence type="ECO:0000255" key="1">
    <source>
        <dbReference type="HAMAP-Rule" id="MF_00381"/>
    </source>
</evidence>
<evidence type="ECO:0000256" key="2">
    <source>
        <dbReference type="SAM" id="MobiDB-lite"/>
    </source>
</evidence>
<gene>
    <name evidence="1" type="primary">ihfB</name>
    <name evidence="1" type="synonym">himD</name>
    <name type="ordered locus">Shew185_2278</name>
</gene>
<reference key="1">
    <citation type="submission" date="2007-07" db="EMBL/GenBank/DDBJ databases">
        <title>Complete sequence of chromosome of Shewanella baltica OS185.</title>
        <authorList>
            <consortium name="US DOE Joint Genome Institute"/>
            <person name="Copeland A."/>
            <person name="Lucas S."/>
            <person name="Lapidus A."/>
            <person name="Barry K."/>
            <person name="Glavina del Rio T."/>
            <person name="Dalin E."/>
            <person name="Tice H."/>
            <person name="Pitluck S."/>
            <person name="Sims D."/>
            <person name="Brettin T."/>
            <person name="Bruce D."/>
            <person name="Detter J.C."/>
            <person name="Han C."/>
            <person name="Schmutz J."/>
            <person name="Larimer F."/>
            <person name="Land M."/>
            <person name="Hauser L."/>
            <person name="Kyrpides N."/>
            <person name="Mikhailova N."/>
            <person name="Brettar I."/>
            <person name="Rodrigues J."/>
            <person name="Konstantinidis K."/>
            <person name="Tiedje J."/>
            <person name="Richardson P."/>
        </authorList>
    </citation>
    <scope>NUCLEOTIDE SEQUENCE [LARGE SCALE GENOMIC DNA]</scope>
    <source>
        <strain>OS185</strain>
    </source>
</reference>
<protein>
    <recommendedName>
        <fullName evidence="1">Integration host factor subunit beta</fullName>
        <shortName evidence="1">IHF-beta</shortName>
    </recommendedName>
</protein>
<proteinExistence type="inferred from homology"/>
<dbReference type="EMBL" id="CP000753">
    <property type="protein sequence ID" value="ABS08416.1"/>
    <property type="molecule type" value="Genomic_DNA"/>
</dbReference>
<dbReference type="RefSeq" id="WP_006081718.1">
    <property type="nucleotide sequence ID" value="NC_009665.1"/>
</dbReference>
<dbReference type="SMR" id="A6WNM7"/>
<dbReference type="GeneID" id="11772512"/>
<dbReference type="KEGG" id="sbm:Shew185_2278"/>
<dbReference type="HOGENOM" id="CLU_105066_2_0_6"/>
<dbReference type="GO" id="GO:0005694">
    <property type="term" value="C:chromosome"/>
    <property type="evidence" value="ECO:0007669"/>
    <property type="project" value="InterPro"/>
</dbReference>
<dbReference type="GO" id="GO:0005829">
    <property type="term" value="C:cytosol"/>
    <property type="evidence" value="ECO:0007669"/>
    <property type="project" value="TreeGrafter"/>
</dbReference>
<dbReference type="GO" id="GO:0003677">
    <property type="term" value="F:DNA binding"/>
    <property type="evidence" value="ECO:0007669"/>
    <property type="project" value="UniProtKB-UniRule"/>
</dbReference>
<dbReference type="GO" id="GO:0030527">
    <property type="term" value="F:structural constituent of chromatin"/>
    <property type="evidence" value="ECO:0007669"/>
    <property type="project" value="InterPro"/>
</dbReference>
<dbReference type="GO" id="GO:0006310">
    <property type="term" value="P:DNA recombination"/>
    <property type="evidence" value="ECO:0007669"/>
    <property type="project" value="UniProtKB-UniRule"/>
</dbReference>
<dbReference type="GO" id="GO:0006355">
    <property type="term" value="P:regulation of DNA-templated transcription"/>
    <property type="evidence" value="ECO:0007669"/>
    <property type="project" value="UniProtKB-UniRule"/>
</dbReference>
<dbReference type="GO" id="GO:0006417">
    <property type="term" value="P:regulation of translation"/>
    <property type="evidence" value="ECO:0007669"/>
    <property type="project" value="UniProtKB-UniRule"/>
</dbReference>
<dbReference type="CDD" id="cd13836">
    <property type="entry name" value="IHF_B"/>
    <property type="match status" value="1"/>
</dbReference>
<dbReference type="FunFam" id="4.10.520.10:FF:000003">
    <property type="entry name" value="Integration host factor subunit beta"/>
    <property type="match status" value="1"/>
</dbReference>
<dbReference type="Gene3D" id="4.10.520.10">
    <property type="entry name" value="IHF-like DNA-binding proteins"/>
    <property type="match status" value="1"/>
</dbReference>
<dbReference type="HAMAP" id="MF_00381">
    <property type="entry name" value="IHF_beta"/>
    <property type="match status" value="1"/>
</dbReference>
<dbReference type="InterPro" id="IPR000119">
    <property type="entry name" value="Hist_DNA-bd"/>
</dbReference>
<dbReference type="InterPro" id="IPR020816">
    <property type="entry name" value="Histone-like_DNA-bd_CS"/>
</dbReference>
<dbReference type="InterPro" id="IPR010992">
    <property type="entry name" value="IHF-like_DNA-bd_dom_sf"/>
</dbReference>
<dbReference type="InterPro" id="IPR005685">
    <property type="entry name" value="IHF_beta"/>
</dbReference>
<dbReference type="NCBIfam" id="TIGR00988">
    <property type="entry name" value="hip"/>
    <property type="match status" value="1"/>
</dbReference>
<dbReference type="NCBIfam" id="NF001222">
    <property type="entry name" value="PRK00199.1"/>
    <property type="match status" value="1"/>
</dbReference>
<dbReference type="PANTHER" id="PTHR33175">
    <property type="entry name" value="DNA-BINDING PROTEIN HU"/>
    <property type="match status" value="1"/>
</dbReference>
<dbReference type="PANTHER" id="PTHR33175:SF5">
    <property type="entry name" value="INTEGRATION HOST FACTOR SUBUNIT BETA"/>
    <property type="match status" value="1"/>
</dbReference>
<dbReference type="Pfam" id="PF00216">
    <property type="entry name" value="Bac_DNA_binding"/>
    <property type="match status" value="1"/>
</dbReference>
<dbReference type="PRINTS" id="PR01727">
    <property type="entry name" value="DNABINDINGHU"/>
</dbReference>
<dbReference type="SMART" id="SM00411">
    <property type="entry name" value="BHL"/>
    <property type="match status" value="1"/>
</dbReference>
<dbReference type="SUPFAM" id="SSF47729">
    <property type="entry name" value="IHF-like DNA-binding proteins"/>
    <property type="match status" value="1"/>
</dbReference>
<dbReference type="PROSITE" id="PS00045">
    <property type="entry name" value="HISTONE_LIKE"/>
    <property type="match status" value="1"/>
</dbReference>